<proteinExistence type="evidence at protein level"/>
<sequence length="436" mass="49036">MQGTPGGGTRPGPSPVDRRTLLVFSFILAAALGQMNFTGDQVLRVLAKDEKQLSLLGDLEGLKPQKVDFWRGPARPSLPVDMRVPFSELKDIKAYLESHGLAYSIMIKDIQVLLDEERQAMAKSRRLERSTNSFSYSSYHTLEEIYSWIDNFVMEHSDIVSKIQIGNSFENQSILVLKFSTGGSRHPAIWIDTGIHSREWITHATGIWTANKIVSDYGKDRVLTDILNAMDIFIELVTNPDGFAFTHSMNRLWRKNKSIRPGIFCIGVDLNRNWKSGFGGNGSNSNPCSETYHGPSPQSEPEVAAIVNFITAHGNFKALISIHSYSQMLMYPYGRLLEPVSNQRELYDLAKDAVEALYKVHGIEYIFGSISTTLYVASGITVDWAYDSGIKYAFSFELRDTGQYGFLLPATQIIPTAQETWMALRTIMEHTLNHPY</sequence>
<organism>
    <name type="scientific">Homo sapiens</name>
    <name type="common">Human</name>
    <dbReference type="NCBI Taxonomy" id="9606"/>
    <lineage>
        <taxon>Eukaryota</taxon>
        <taxon>Metazoa</taxon>
        <taxon>Chordata</taxon>
        <taxon>Craniata</taxon>
        <taxon>Vertebrata</taxon>
        <taxon>Euteleostomi</taxon>
        <taxon>Mammalia</taxon>
        <taxon>Eutheria</taxon>
        <taxon>Euarchontoglires</taxon>
        <taxon>Primates</taxon>
        <taxon>Haplorrhini</taxon>
        <taxon>Catarrhini</taxon>
        <taxon>Hominidae</taxon>
        <taxon>Homo</taxon>
    </lineage>
</organism>
<comment type="cofactor">
    <cofactor evidence="2">
        <name>Zn(2+)</name>
        <dbReference type="ChEBI" id="CHEBI:29105"/>
    </cofactor>
    <text evidence="2">Binds 1 zinc ion per subunit.</text>
</comment>
<comment type="subcellular location">
    <subcellularLocation>
        <location evidence="1">Secreted</location>
    </subcellularLocation>
</comment>
<comment type="alternative products">
    <event type="alternative splicing"/>
    <isoform>
        <id>Q8WXQ8-1</id>
        <name>1</name>
        <sequence type="displayed"/>
    </isoform>
    <isoform>
        <id>Q8WXQ8-2</id>
        <name>2</name>
        <sequence type="described" ref="VSP_008806 VSP_008807"/>
    </isoform>
    <isoform>
        <id>Q8WXQ8-3</id>
        <name>3</name>
        <sequence type="described" ref="VSP_044866"/>
    </isoform>
</comment>
<comment type="tissue specificity">
    <text>Expression is very low or not detectable.</text>
</comment>
<comment type="similarity">
    <text evidence="9">Belongs to the peptidase M14 family.</text>
</comment>
<dbReference type="EC" id="3.4.17.-"/>
<dbReference type="EMBL" id="AF384667">
    <property type="protein sequence ID" value="AAL37611.1"/>
    <property type="molecule type" value="mRNA"/>
</dbReference>
<dbReference type="EMBL" id="AY155229">
    <property type="protein sequence ID" value="AAO17155.1"/>
    <property type="molecule type" value="mRNA"/>
</dbReference>
<dbReference type="EMBL" id="AY155230">
    <property type="protein sequence ID" value="AAO17156.1"/>
    <property type="molecule type" value="mRNA"/>
</dbReference>
<dbReference type="EMBL" id="AK093288">
    <property type="protein sequence ID" value="BAC04122.1"/>
    <property type="molecule type" value="mRNA"/>
</dbReference>
<dbReference type="EMBL" id="AK131191">
    <property type="protein sequence ID" value="BAD18389.1"/>
    <property type="molecule type" value="mRNA"/>
</dbReference>
<dbReference type="EMBL" id="AC007938">
    <property type="status" value="NOT_ANNOTATED_CDS"/>
    <property type="molecule type" value="Genomic_DNA"/>
</dbReference>
<dbReference type="EMBL" id="CH471070">
    <property type="protein sequence ID" value="EAW83757.1"/>
    <property type="molecule type" value="Genomic_DNA"/>
</dbReference>
<dbReference type="EMBL" id="BC039362">
    <property type="protein sequence ID" value="AAH39362.1"/>
    <property type="molecule type" value="mRNA"/>
</dbReference>
<dbReference type="EMBL" id="BC042996">
    <property type="protein sequence ID" value="AAH42996.1"/>
    <property type="molecule type" value="mRNA"/>
</dbReference>
<dbReference type="EMBL" id="BK000187">
    <property type="protein sequence ID" value="DAA00035.1"/>
    <property type="molecule type" value="mRNA"/>
</dbReference>
<dbReference type="CCDS" id="CCDS47713.1">
    <molecule id="Q8WXQ8-3"/>
</dbReference>
<dbReference type="CCDS" id="CCDS5819.1">
    <molecule id="Q8WXQ8-1"/>
</dbReference>
<dbReference type="RefSeq" id="NP_001120913.1">
    <molecule id="Q8WXQ8-1"/>
    <property type="nucleotide sequence ID" value="NM_001127441.2"/>
</dbReference>
<dbReference type="RefSeq" id="NP_001120914.1">
    <molecule id="Q8WXQ8-3"/>
    <property type="nucleotide sequence ID" value="NM_001127442.2"/>
</dbReference>
<dbReference type="RefSeq" id="NP_001305152.1">
    <molecule id="Q8WXQ8-1"/>
    <property type="nucleotide sequence ID" value="NM_001318223.2"/>
</dbReference>
<dbReference type="RefSeq" id="NP_525124.3">
    <molecule id="Q8WXQ8-1"/>
    <property type="nucleotide sequence ID" value="NM_080385.4"/>
</dbReference>
<dbReference type="RefSeq" id="XP_005250767.1">
    <molecule id="Q8WXQ8-1"/>
    <property type="nucleotide sequence ID" value="XM_005250710.2"/>
</dbReference>
<dbReference type="RefSeq" id="XP_005250769.1">
    <molecule id="Q8WXQ8-1"/>
    <property type="nucleotide sequence ID" value="XM_005250712.2"/>
</dbReference>
<dbReference type="RefSeq" id="XP_011515000.1">
    <molecule id="Q8WXQ8-1"/>
    <property type="nucleotide sequence ID" value="XM_011516698.2"/>
</dbReference>
<dbReference type="RefSeq" id="XP_011515003.1">
    <property type="nucleotide sequence ID" value="XM_011516701.1"/>
</dbReference>
<dbReference type="RefSeq" id="XP_011515004.1">
    <property type="nucleotide sequence ID" value="XM_011516702.1"/>
</dbReference>
<dbReference type="RefSeq" id="XP_011515005.1">
    <molecule id="Q8WXQ8-1"/>
    <property type="nucleotide sequence ID" value="XM_011516703.2"/>
</dbReference>
<dbReference type="RefSeq" id="XP_011515006.1">
    <property type="nucleotide sequence ID" value="XM_011516704.1"/>
</dbReference>
<dbReference type="RefSeq" id="XP_024302767.1">
    <molecule id="Q8WXQ8-1"/>
    <property type="nucleotide sequence ID" value="XM_024446999.2"/>
</dbReference>
<dbReference type="RefSeq" id="XP_024302768.1">
    <molecule id="Q8WXQ8-1"/>
    <property type="nucleotide sequence ID" value="XM_024447000.2"/>
</dbReference>
<dbReference type="RefSeq" id="XP_024302769.1">
    <molecule id="Q8WXQ8-1"/>
    <property type="nucleotide sequence ID" value="XM_024447001.2"/>
</dbReference>
<dbReference type="RefSeq" id="XP_047276991.1">
    <molecule id="Q8WXQ8-1"/>
    <property type="nucleotide sequence ID" value="XM_047421035.1"/>
</dbReference>
<dbReference type="RefSeq" id="XP_047276992.1">
    <molecule id="Q8WXQ8-1"/>
    <property type="nucleotide sequence ID" value="XM_047421036.1"/>
</dbReference>
<dbReference type="RefSeq" id="XP_047276993.1">
    <molecule id="Q8WXQ8-1"/>
    <property type="nucleotide sequence ID" value="XM_047421037.1"/>
</dbReference>
<dbReference type="RefSeq" id="XP_047276994.1">
    <molecule id="Q8WXQ8-3"/>
    <property type="nucleotide sequence ID" value="XM_047421038.1"/>
</dbReference>
<dbReference type="SMR" id="Q8WXQ8"/>
<dbReference type="BioGRID" id="125066">
    <property type="interactions" value="22"/>
</dbReference>
<dbReference type="FunCoup" id="Q8WXQ8">
    <property type="interactions" value="63"/>
</dbReference>
<dbReference type="IntAct" id="Q8WXQ8">
    <property type="interactions" value="18"/>
</dbReference>
<dbReference type="MINT" id="Q8WXQ8"/>
<dbReference type="STRING" id="9606.ENSP00000420237"/>
<dbReference type="MEROPS" id="M14.020"/>
<dbReference type="iPTMnet" id="Q8WXQ8"/>
<dbReference type="PhosphoSitePlus" id="Q8WXQ8"/>
<dbReference type="BioMuta" id="CPA5"/>
<dbReference type="DMDM" id="38257690"/>
<dbReference type="MassIVE" id="Q8WXQ8"/>
<dbReference type="PaxDb" id="9606-ENSP00000420237"/>
<dbReference type="PeptideAtlas" id="Q8WXQ8"/>
<dbReference type="ProteomicsDB" id="32193"/>
<dbReference type="ProteomicsDB" id="75078">
    <molecule id="Q8WXQ8-1"/>
</dbReference>
<dbReference type="ProteomicsDB" id="75079">
    <molecule id="Q8WXQ8-2"/>
</dbReference>
<dbReference type="TopDownProteomics" id="Q8WXQ8-1">
    <molecule id="Q8WXQ8-1"/>
</dbReference>
<dbReference type="Antibodypedia" id="32057">
    <property type="antibodies" value="94 antibodies from 24 providers"/>
</dbReference>
<dbReference type="DNASU" id="93979"/>
<dbReference type="Ensembl" id="ENST00000393213.7">
    <molecule id="Q8WXQ8-1"/>
    <property type="protein sequence ID" value="ENSP00000376907.3"/>
    <property type="gene ID" value="ENSG00000158525.16"/>
</dbReference>
<dbReference type="Ensembl" id="ENST00000431780.6">
    <molecule id="Q8WXQ8-3"/>
    <property type="protein sequence ID" value="ENSP00000393045.2"/>
    <property type="gene ID" value="ENSG00000158525.16"/>
</dbReference>
<dbReference type="Ensembl" id="ENST00000461828.5">
    <molecule id="Q8WXQ8-1"/>
    <property type="protein sequence ID" value="ENSP00000418183.1"/>
    <property type="gene ID" value="ENSG00000158525.16"/>
</dbReference>
<dbReference type="Ensembl" id="ENST00000466363.6">
    <molecule id="Q8WXQ8-1"/>
    <property type="protein sequence ID" value="ENSP00000419025.2"/>
    <property type="gene ID" value="ENSG00000158525.16"/>
</dbReference>
<dbReference type="Ensembl" id="ENST00000474905.6">
    <molecule id="Q8WXQ8-1"/>
    <property type="protein sequence ID" value="ENSP00000417314.1"/>
    <property type="gene ID" value="ENSG00000158525.16"/>
</dbReference>
<dbReference type="Ensembl" id="ENST00000485477.5">
    <molecule id="Q8WXQ8-1"/>
    <property type="protein sequence ID" value="ENSP00000420237.1"/>
    <property type="gene ID" value="ENSG00000158525.16"/>
</dbReference>
<dbReference type="GeneID" id="93979"/>
<dbReference type="KEGG" id="hsa:93979"/>
<dbReference type="MANE-Select" id="ENST00000474905.6">
    <property type="protein sequence ID" value="ENSP00000417314.1"/>
    <property type="RefSeq nucleotide sequence ID" value="NM_080385.5"/>
    <property type="RefSeq protein sequence ID" value="NP_525124.3"/>
</dbReference>
<dbReference type="UCSC" id="uc003vps.3">
    <molecule id="Q8WXQ8-1"/>
    <property type="organism name" value="human"/>
</dbReference>
<dbReference type="AGR" id="HGNC:15722"/>
<dbReference type="CTD" id="93979"/>
<dbReference type="DisGeNET" id="93979"/>
<dbReference type="GeneCards" id="CPA5"/>
<dbReference type="HGNC" id="HGNC:15722">
    <property type="gene designation" value="CPA5"/>
</dbReference>
<dbReference type="HPA" id="ENSG00000158525">
    <property type="expression patterns" value="Tissue enriched (testis)"/>
</dbReference>
<dbReference type="MIM" id="609561">
    <property type="type" value="gene"/>
</dbReference>
<dbReference type="neXtProt" id="NX_Q8WXQ8"/>
<dbReference type="OpenTargets" id="ENSG00000158525"/>
<dbReference type="PharmGKB" id="PA26820"/>
<dbReference type="VEuPathDB" id="HostDB:ENSG00000158525"/>
<dbReference type="eggNOG" id="KOG2650">
    <property type="taxonomic scope" value="Eukaryota"/>
</dbReference>
<dbReference type="GeneTree" id="ENSGT00940000161666"/>
<dbReference type="HOGENOM" id="CLU_019326_0_0_1"/>
<dbReference type="InParanoid" id="Q8WXQ8"/>
<dbReference type="OMA" id="AAWGQMN"/>
<dbReference type="OrthoDB" id="3626597at2759"/>
<dbReference type="PAN-GO" id="Q8WXQ8">
    <property type="GO annotations" value="3 GO annotations based on evolutionary models"/>
</dbReference>
<dbReference type="PhylomeDB" id="Q8WXQ8"/>
<dbReference type="TreeFam" id="TF317197"/>
<dbReference type="PathwayCommons" id="Q8WXQ8"/>
<dbReference type="SignaLink" id="Q8WXQ8"/>
<dbReference type="BioGRID-ORCS" id="93979">
    <property type="hits" value="10 hits in 1145 CRISPR screens"/>
</dbReference>
<dbReference type="GeneWiki" id="CPA5"/>
<dbReference type="GenomeRNAi" id="93979"/>
<dbReference type="Pharos" id="Q8WXQ8">
    <property type="development level" value="Tbio"/>
</dbReference>
<dbReference type="PRO" id="PR:Q8WXQ8"/>
<dbReference type="Proteomes" id="UP000005640">
    <property type="component" value="Chromosome 7"/>
</dbReference>
<dbReference type="RNAct" id="Q8WXQ8">
    <property type="molecule type" value="protein"/>
</dbReference>
<dbReference type="Bgee" id="ENSG00000158525">
    <property type="expression patterns" value="Expressed in male germ line stem cell (sensu Vertebrata) in testis and 107 other cell types or tissues"/>
</dbReference>
<dbReference type="ExpressionAtlas" id="Q8WXQ8">
    <property type="expression patterns" value="baseline and differential"/>
</dbReference>
<dbReference type="GO" id="GO:0005615">
    <property type="term" value="C:extracellular space"/>
    <property type="evidence" value="ECO:0000318"/>
    <property type="project" value="GO_Central"/>
</dbReference>
<dbReference type="GO" id="GO:0004181">
    <property type="term" value="F:metallocarboxypeptidase activity"/>
    <property type="evidence" value="ECO:0000318"/>
    <property type="project" value="GO_Central"/>
</dbReference>
<dbReference type="GO" id="GO:0008270">
    <property type="term" value="F:zinc ion binding"/>
    <property type="evidence" value="ECO:0007669"/>
    <property type="project" value="InterPro"/>
</dbReference>
<dbReference type="GO" id="GO:0006508">
    <property type="term" value="P:proteolysis"/>
    <property type="evidence" value="ECO:0000318"/>
    <property type="project" value="GO_Central"/>
</dbReference>
<dbReference type="CDD" id="cd03870">
    <property type="entry name" value="M14_CPA"/>
    <property type="match status" value="1"/>
</dbReference>
<dbReference type="FunFam" id="3.40.630.10:FF:000132">
    <property type="entry name" value="Carboxypeptidase A1"/>
    <property type="match status" value="1"/>
</dbReference>
<dbReference type="FunFam" id="3.30.70.340:FF:000001">
    <property type="entry name" value="Carboxypeptidase A5"/>
    <property type="match status" value="1"/>
</dbReference>
<dbReference type="Gene3D" id="3.30.70.340">
    <property type="entry name" value="Metallocarboxypeptidase-like"/>
    <property type="match status" value="1"/>
</dbReference>
<dbReference type="Gene3D" id="3.40.630.10">
    <property type="entry name" value="Zn peptidases"/>
    <property type="match status" value="1"/>
</dbReference>
<dbReference type="InterPro" id="IPR034248">
    <property type="entry name" value="CPA_M14_CPD"/>
</dbReference>
<dbReference type="InterPro" id="IPR036990">
    <property type="entry name" value="M14A-like_propep"/>
</dbReference>
<dbReference type="InterPro" id="IPR003146">
    <property type="entry name" value="M14A_act_pep"/>
</dbReference>
<dbReference type="InterPro" id="IPR000834">
    <property type="entry name" value="Peptidase_M14"/>
</dbReference>
<dbReference type="PANTHER" id="PTHR11705:SF16">
    <property type="entry name" value="CARBOXYPEPTIDASE A5"/>
    <property type="match status" value="1"/>
</dbReference>
<dbReference type="PANTHER" id="PTHR11705">
    <property type="entry name" value="PROTEASE FAMILY M14 CARBOXYPEPTIDASE A,B"/>
    <property type="match status" value="1"/>
</dbReference>
<dbReference type="Pfam" id="PF00246">
    <property type="entry name" value="Peptidase_M14"/>
    <property type="match status" value="1"/>
</dbReference>
<dbReference type="Pfam" id="PF02244">
    <property type="entry name" value="Propep_M14"/>
    <property type="match status" value="1"/>
</dbReference>
<dbReference type="PRINTS" id="PR00765">
    <property type="entry name" value="CRBOXYPTASEA"/>
</dbReference>
<dbReference type="SMART" id="SM00631">
    <property type="entry name" value="Zn_pept"/>
    <property type="match status" value="1"/>
</dbReference>
<dbReference type="SUPFAM" id="SSF54897">
    <property type="entry name" value="Protease propeptides/inhibitors"/>
    <property type="match status" value="1"/>
</dbReference>
<dbReference type="SUPFAM" id="SSF53187">
    <property type="entry name" value="Zn-dependent exopeptidases"/>
    <property type="match status" value="1"/>
</dbReference>
<dbReference type="PROSITE" id="PS00132">
    <property type="entry name" value="CARBOXYPEPT_ZN_1"/>
    <property type="match status" value="1"/>
</dbReference>
<dbReference type="PROSITE" id="PS00133">
    <property type="entry name" value="CARBOXYPEPT_ZN_2"/>
    <property type="match status" value="1"/>
</dbReference>
<dbReference type="PROSITE" id="PS52035">
    <property type="entry name" value="PEPTIDASE_M14"/>
    <property type="match status" value="1"/>
</dbReference>
<accession>Q8WXQ8</accession>
<accession>G3V0G8</accession>
<accession>Q6ZNI6</accession>
<accession>Q86SE2</accession>
<accession>Q86XM3</accession>
<accession>Q8NA08</accession>
<keyword id="KW-0025">Alternative splicing</keyword>
<keyword id="KW-0121">Carboxypeptidase</keyword>
<keyword id="KW-0165">Cleavage on pair of basic residues</keyword>
<keyword id="KW-1015">Disulfide bond</keyword>
<keyword id="KW-0378">Hydrolase</keyword>
<keyword id="KW-0479">Metal-binding</keyword>
<keyword id="KW-0482">Metalloprotease</keyword>
<keyword id="KW-0645">Protease</keyword>
<keyword id="KW-1267">Proteomics identification</keyword>
<keyword id="KW-1185">Reference proteome</keyword>
<keyword id="KW-0964">Secreted</keyword>
<keyword id="KW-0732">Signal</keyword>
<keyword id="KW-0862">Zinc</keyword>
<keyword id="KW-0865">Zymogen</keyword>
<protein>
    <recommendedName>
        <fullName>Carboxypeptidase A5</fullName>
        <ecNumber>3.4.17.-</ecNumber>
    </recommendedName>
</protein>
<gene>
    <name type="primary">CPA5</name>
</gene>
<name>CBPA5_HUMAN</name>
<reference key="1">
    <citation type="journal article" date="2002" name="Mol. Psychiatry">
        <title>Mutation screening and imprinting analysis of four candidate genes for autism in the 7q32 region.</title>
        <authorList>
            <person name="Bonora E."/>
            <person name="Bacchelli E."/>
            <person name="Levy E.R."/>
            <person name="Blasi F."/>
            <person name="Marlow A."/>
            <person name="Monaco A.P."/>
            <person name="Maestrini E."/>
        </authorList>
    </citation>
    <scope>NUCLEOTIDE SEQUENCE [MRNA] (ISOFORM 1)</scope>
    <scope>VARIANTS SER-79; SER-336 AND ASP-338</scope>
</reference>
<reference key="2">
    <citation type="journal article" date="2003" name="J. Med. Genet.">
        <title>The imprinted region on human chromosome 7q32 extends to the carboxypeptidase A gene cluster: an imprinted candidate for Silver-Russell syndrome.</title>
        <authorList>
            <person name="Bentley L."/>
            <person name="Nakabayashi K."/>
            <person name="Monk D."/>
            <person name="Beechey C."/>
            <person name="Peters J."/>
            <person name="Birjandi Z."/>
            <person name="Khayat F.E."/>
            <person name="Patel M."/>
            <person name="Preece M.A."/>
            <person name="Stanier P."/>
            <person name="Scherer S.W."/>
            <person name="Moore G.E."/>
        </authorList>
    </citation>
    <scope>NUCLEOTIDE SEQUENCE [MRNA] (ISOFORM 1)</scope>
    <source>
        <tissue>Medulla oblongata</tissue>
    </source>
</reference>
<reference key="3">
    <citation type="journal article" date="2004" name="Nat. Genet.">
        <title>Complete sequencing and characterization of 21,243 full-length human cDNAs.</title>
        <authorList>
            <person name="Ota T."/>
            <person name="Suzuki Y."/>
            <person name="Nishikawa T."/>
            <person name="Otsuki T."/>
            <person name="Sugiyama T."/>
            <person name="Irie R."/>
            <person name="Wakamatsu A."/>
            <person name="Hayashi K."/>
            <person name="Sato H."/>
            <person name="Nagai K."/>
            <person name="Kimura K."/>
            <person name="Makita H."/>
            <person name="Sekine M."/>
            <person name="Obayashi M."/>
            <person name="Nishi T."/>
            <person name="Shibahara T."/>
            <person name="Tanaka T."/>
            <person name="Ishii S."/>
            <person name="Yamamoto J."/>
            <person name="Saito K."/>
            <person name="Kawai Y."/>
            <person name="Isono Y."/>
            <person name="Nakamura Y."/>
            <person name="Nagahari K."/>
            <person name="Murakami K."/>
            <person name="Yasuda T."/>
            <person name="Iwayanagi T."/>
            <person name="Wagatsuma M."/>
            <person name="Shiratori A."/>
            <person name="Sudo H."/>
            <person name="Hosoiri T."/>
            <person name="Kaku Y."/>
            <person name="Kodaira H."/>
            <person name="Kondo H."/>
            <person name="Sugawara M."/>
            <person name="Takahashi M."/>
            <person name="Kanda K."/>
            <person name="Yokoi T."/>
            <person name="Furuya T."/>
            <person name="Kikkawa E."/>
            <person name="Omura Y."/>
            <person name="Abe K."/>
            <person name="Kamihara K."/>
            <person name="Katsuta N."/>
            <person name="Sato K."/>
            <person name="Tanikawa M."/>
            <person name="Yamazaki M."/>
            <person name="Ninomiya K."/>
            <person name="Ishibashi T."/>
            <person name="Yamashita H."/>
            <person name="Murakawa K."/>
            <person name="Fujimori K."/>
            <person name="Tanai H."/>
            <person name="Kimata M."/>
            <person name="Watanabe M."/>
            <person name="Hiraoka S."/>
            <person name="Chiba Y."/>
            <person name="Ishida S."/>
            <person name="Ono Y."/>
            <person name="Takiguchi S."/>
            <person name="Watanabe S."/>
            <person name="Yosida M."/>
            <person name="Hotuta T."/>
            <person name="Kusano J."/>
            <person name="Kanehori K."/>
            <person name="Takahashi-Fujii A."/>
            <person name="Hara H."/>
            <person name="Tanase T.-O."/>
            <person name="Nomura Y."/>
            <person name="Togiya S."/>
            <person name="Komai F."/>
            <person name="Hara R."/>
            <person name="Takeuchi K."/>
            <person name="Arita M."/>
            <person name="Imose N."/>
            <person name="Musashino K."/>
            <person name="Yuuki H."/>
            <person name="Oshima A."/>
            <person name="Sasaki N."/>
            <person name="Aotsuka S."/>
            <person name="Yoshikawa Y."/>
            <person name="Matsunawa H."/>
            <person name="Ichihara T."/>
            <person name="Shiohata N."/>
            <person name="Sano S."/>
            <person name="Moriya S."/>
            <person name="Momiyama H."/>
            <person name="Satoh N."/>
            <person name="Takami S."/>
            <person name="Terashima Y."/>
            <person name="Suzuki O."/>
            <person name="Nakagawa S."/>
            <person name="Senoh A."/>
            <person name="Mizoguchi H."/>
            <person name="Goto Y."/>
            <person name="Shimizu F."/>
            <person name="Wakebe H."/>
            <person name="Hishigaki H."/>
            <person name="Watanabe T."/>
            <person name="Sugiyama A."/>
            <person name="Takemoto M."/>
            <person name="Kawakami B."/>
            <person name="Yamazaki M."/>
            <person name="Watanabe K."/>
            <person name="Kumagai A."/>
            <person name="Itakura S."/>
            <person name="Fukuzumi Y."/>
            <person name="Fujimori Y."/>
            <person name="Komiyama M."/>
            <person name="Tashiro H."/>
            <person name="Tanigami A."/>
            <person name="Fujiwara T."/>
            <person name="Ono T."/>
            <person name="Yamada K."/>
            <person name="Fujii Y."/>
            <person name="Ozaki K."/>
            <person name="Hirao M."/>
            <person name="Ohmori Y."/>
            <person name="Kawabata A."/>
            <person name="Hikiji T."/>
            <person name="Kobatake N."/>
            <person name="Inagaki H."/>
            <person name="Ikema Y."/>
            <person name="Okamoto S."/>
            <person name="Okitani R."/>
            <person name="Kawakami T."/>
            <person name="Noguchi S."/>
            <person name="Itoh T."/>
            <person name="Shigeta K."/>
            <person name="Senba T."/>
            <person name="Matsumura K."/>
            <person name="Nakajima Y."/>
            <person name="Mizuno T."/>
            <person name="Morinaga M."/>
            <person name="Sasaki M."/>
            <person name="Togashi T."/>
            <person name="Oyama M."/>
            <person name="Hata H."/>
            <person name="Watanabe M."/>
            <person name="Komatsu T."/>
            <person name="Mizushima-Sugano J."/>
            <person name="Satoh T."/>
            <person name="Shirai Y."/>
            <person name="Takahashi Y."/>
            <person name="Nakagawa K."/>
            <person name="Okumura K."/>
            <person name="Nagase T."/>
            <person name="Nomura N."/>
            <person name="Kikuchi H."/>
            <person name="Masuho Y."/>
            <person name="Yamashita R."/>
            <person name="Nakai K."/>
            <person name="Yada T."/>
            <person name="Nakamura Y."/>
            <person name="Ohara O."/>
            <person name="Isogai T."/>
            <person name="Sugano S."/>
        </authorList>
    </citation>
    <scope>NUCLEOTIDE SEQUENCE [LARGE SCALE MRNA] (ISOFORMS 2 AND 3)</scope>
    <source>
        <tissue>Testis</tissue>
    </source>
</reference>
<reference key="4">
    <citation type="journal article" date="2003" name="Nature">
        <title>The DNA sequence of human chromosome 7.</title>
        <authorList>
            <person name="Hillier L.W."/>
            <person name="Fulton R.S."/>
            <person name="Fulton L.A."/>
            <person name="Graves T.A."/>
            <person name="Pepin K.H."/>
            <person name="Wagner-McPherson C."/>
            <person name="Layman D."/>
            <person name="Maas J."/>
            <person name="Jaeger S."/>
            <person name="Walker R."/>
            <person name="Wylie K."/>
            <person name="Sekhon M."/>
            <person name="Becker M.C."/>
            <person name="O'Laughlin M.D."/>
            <person name="Schaller M.E."/>
            <person name="Fewell G.A."/>
            <person name="Delehaunty K.D."/>
            <person name="Miner T.L."/>
            <person name="Nash W.E."/>
            <person name="Cordes M."/>
            <person name="Du H."/>
            <person name="Sun H."/>
            <person name="Edwards J."/>
            <person name="Bradshaw-Cordum H."/>
            <person name="Ali J."/>
            <person name="Andrews S."/>
            <person name="Isak A."/>
            <person name="Vanbrunt A."/>
            <person name="Nguyen C."/>
            <person name="Du F."/>
            <person name="Lamar B."/>
            <person name="Courtney L."/>
            <person name="Kalicki J."/>
            <person name="Ozersky P."/>
            <person name="Bielicki L."/>
            <person name="Scott K."/>
            <person name="Holmes A."/>
            <person name="Harkins R."/>
            <person name="Harris A."/>
            <person name="Strong C.M."/>
            <person name="Hou S."/>
            <person name="Tomlinson C."/>
            <person name="Dauphin-Kohlberg S."/>
            <person name="Kozlowicz-Reilly A."/>
            <person name="Leonard S."/>
            <person name="Rohlfing T."/>
            <person name="Rock S.M."/>
            <person name="Tin-Wollam A.-M."/>
            <person name="Abbott A."/>
            <person name="Minx P."/>
            <person name="Maupin R."/>
            <person name="Strowmatt C."/>
            <person name="Latreille P."/>
            <person name="Miller N."/>
            <person name="Johnson D."/>
            <person name="Murray J."/>
            <person name="Woessner J.P."/>
            <person name="Wendl M.C."/>
            <person name="Yang S.-P."/>
            <person name="Schultz B.R."/>
            <person name="Wallis J.W."/>
            <person name="Spieth J."/>
            <person name="Bieri T.A."/>
            <person name="Nelson J.O."/>
            <person name="Berkowicz N."/>
            <person name="Wohldmann P.E."/>
            <person name="Cook L.L."/>
            <person name="Hickenbotham M.T."/>
            <person name="Eldred J."/>
            <person name="Williams D."/>
            <person name="Bedell J.A."/>
            <person name="Mardis E.R."/>
            <person name="Clifton S.W."/>
            <person name="Chissoe S.L."/>
            <person name="Marra M.A."/>
            <person name="Raymond C."/>
            <person name="Haugen E."/>
            <person name="Gillett W."/>
            <person name="Zhou Y."/>
            <person name="James R."/>
            <person name="Phelps K."/>
            <person name="Iadanoto S."/>
            <person name="Bubb K."/>
            <person name="Simms E."/>
            <person name="Levy R."/>
            <person name="Clendenning J."/>
            <person name="Kaul R."/>
            <person name="Kent W.J."/>
            <person name="Furey T.S."/>
            <person name="Baertsch R.A."/>
            <person name="Brent M.R."/>
            <person name="Keibler E."/>
            <person name="Flicek P."/>
            <person name="Bork P."/>
            <person name="Suyama M."/>
            <person name="Bailey J.A."/>
            <person name="Portnoy M.E."/>
            <person name="Torrents D."/>
            <person name="Chinwalla A.T."/>
            <person name="Gish W.R."/>
            <person name="Eddy S.R."/>
            <person name="McPherson J.D."/>
            <person name="Olson M.V."/>
            <person name="Eichler E.E."/>
            <person name="Green E.D."/>
            <person name="Waterston R.H."/>
            <person name="Wilson R.K."/>
        </authorList>
    </citation>
    <scope>NUCLEOTIDE SEQUENCE [LARGE SCALE GENOMIC DNA]</scope>
</reference>
<reference key="5">
    <citation type="submission" date="2005-07" db="EMBL/GenBank/DDBJ databases">
        <authorList>
            <person name="Mural R.J."/>
            <person name="Istrail S."/>
            <person name="Sutton G."/>
            <person name="Florea L."/>
            <person name="Halpern A.L."/>
            <person name="Mobarry C.M."/>
            <person name="Lippert R."/>
            <person name="Walenz B."/>
            <person name="Shatkay H."/>
            <person name="Dew I."/>
            <person name="Miller J.R."/>
            <person name="Flanigan M.J."/>
            <person name="Edwards N.J."/>
            <person name="Bolanos R."/>
            <person name="Fasulo D."/>
            <person name="Halldorsson B.V."/>
            <person name="Hannenhalli S."/>
            <person name="Turner R."/>
            <person name="Yooseph S."/>
            <person name="Lu F."/>
            <person name="Nusskern D.R."/>
            <person name="Shue B.C."/>
            <person name="Zheng X.H."/>
            <person name="Zhong F."/>
            <person name="Delcher A.L."/>
            <person name="Huson D.H."/>
            <person name="Kravitz S.A."/>
            <person name="Mouchard L."/>
            <person name="Reinert K."/>
            <person name="Remington K.A."/>
            <person name="Clark A.G."/>
            <person name="Waterman M.S."/>
            <person name="Eichler E.E."/>
            <person name="Adams M.D."/>
            <person name="Hunkapiller M.W."/>
            <person name="Myers E.W."/>
            <person name="Venter J.C."/>
        </authorList>
    </citation>
    <scope>NUCLEOTIDE SEQUENCE [LARGE SCALE GENOMIC DNA]</scope>
</reference>
<reference key="6">
    <citation type="journal article" date="2004" name="Genome Res.">
        <title>The status, quality, and expansion of the NIH full-length cDNA project: the Mammalian Gene Collection (MGC).</title>
        <authorList>
            <consortium name="The MGC Project Team"/>
        </authorList>
    </citation>
    <scope>NUCLEOTIDE SEQUENCE [LARGE SCALE MRNA] (ISOFORM 1)</scope>
    <scope>VARIANTS SER-336 AND ASP-338</scope>
    <source>
        <tissue>Testis</tissue>
    </source>
</reference>
<reference key="7">
    <citation type="journal article" date="2002" name="J. Biol. Chem.">
        <title>Identification and characterization of three members of the human metallocarboxypeptidase gene family.</title>
        <authorList>
            <person name="Wei S."/>
            <person name="Segura S."/>
            <person name="Vendrell J."/>
            <person name="Aviles F.X."/>
            <person name="Lanoue E."/>
            <person name="Day R."/>
            <person name="Feng Y."/>
            <person name="Fricker L.D."/>
        </authorList>
    </citation>
    <scope>GENE STRUCTURE</scope>
</reference>
<evidence type="ECO:0000250" key="1"/>
<evidence type="ECO:0000250" key="2">
    <source>
        <dbReference type="UniProtKB" id="P00730"/>
    </source>
</evidence>
<evidence type="ECO:0000250" key="3">
    <source>
        <dbReference type="UniProtKB" id="Q96IY4"/>
    </source>
</evidence>
<evidence type="ECO:0000255" key="4"/>
<evidence type="ECO:0000255" key="5">
    <source>
        <dbReference type="PROSITE-ProRule" id="PRU01379"/>
    </source>
</evidence>
<evidence type="ECO:0000269" key="6">
    <source>
    </source>
</evidence>
<evidence type="ECO:0000269" key="7">
    <source>
    </source>
</evidence>
<evidence type="ECO:0000303" key="8">
    <source>
    </source>
</evidence>
<evidence type="ECO:0000305" key="9"/>
<feature type="signal peptide" evidence="4">
    <location>
        <begin position="1"/>
        <end position="33"/>
    </location>
</feature>
<feature type="propeptide" id="PRO_0000004361" description="Activation peptide" evidence="1">
    <location>
        <begin position="34"/>
        <end position="126"/>
    </location>
</feature>
<feature type="chain" id="PRO_0000004362" description="Carboxypeptidase A5">
    <location>
        <begin position="127"/>
        <end position="436"/>
    </location>
</feature>
<feature type="domain" description="Peptidase M14" evidence="5">
    <location>
        <begin position="138"/>
        <end position="431"/>
    </location>
</feature>
<feature type="active site" description="Proton donor/acceptor" evidence="5">
    <location>
        <position position="397"/>
    </location>
</feature>
<feature type="binding site" evidence="2">
    <location>
        <begin position="196"/>
        <end position="199"/>
    </location>
    <ligand>
        <name>substrate</name>
    </ligand>
</feature>
<feature type="binding site" evidence="5">
    <location>
        <position position="196"/>
    </location>
    <ligand>
        <name>Zn(2+)</name>
        <dbReference type="ChEBI" id="CHEBI:29105"/>
        <note>catalytic</note>
    </ligand>
</feature>
<feature type="binding site" evidence="5">
    <location>
        <position position="199"/>
    </location>
    <ligand>
        <name>Zn(2+)</name>
        <dbReference type="ChEBI" id="CHEBI:29105"/>
        <note>catalytic</note>
    </ligand>
</feature>
<feature type="binding site" evidence="2">
    <location>
        <position position="254"/>
    </location>
    <ligand>
        <name>substrate</name>
    </ligand>
</feature>
<feature type="binding site" evidence="2">
    <location>
        <begin position="271"/>
        <end position="272"/>
    </location>
    <ligand>
        <name>substrate</name>
    </ligand>
</feature>
<feature type="binding site" evidence="5">
    <location>
        <position position="323"/>
    </location>
    <ligand>
        <name>Zn(2+)</name>
        <dbReference type="ChEBI" id="CHEBI:29105"/>
        <note>catalytic</note>
    </ligand>
</feature>
<feature type="binding site" evidence="2">
    <location>
        <begin position="324"/>
        <end position="325"/>
    </location>
    <ligand>
        <name>substrate</name>
    </ligand>
</feature>
<feature type="binding site" evidence="2">
    <location>
        <position position="375"/>
    </location>
    <ligand>
        <name>substrate</name>
    </ligand>
</feature>
<feature type="disulfide bond" evidence="3">
    <location>
        <begin position="265"/>
        <end position="288"/>
    </location>
</feature>
<feature type="splice variant" id="VSP_044866" description="In isoform 3." evidence="8">
    <original>YDLAKDAVEALYKVHGIEYIFGSISTTLYVASGITVDWAYDSGIKYAFSFELRDTGQYGFLLPATQIIPTAQETWMALRTIMEHTLNHPY</original>
    <variation>MWPVGSPSTGPMTVASSTPSALSSGTLGSMASCCRPHRSSPRPRRRGWRFGPSWSTP</variation>
    <location>
        <begin position="347"/>
        <end position="436"/>
    </location>
</feature>
<feature type="splice variant" id="VSP_008806" description="In isoform 2." evidence="8">
    <original>YDLAK</original>
    <variation>VRLAA</variation>
    <location>
        <begin position="347"/>
        <end position="351"/>
    </location>
</feature>
<feature type="splice variant" id="VSP_008807" description="In isoform 2." evidence="8">
    <location>
        <begin position="352"/>
        <end position="436"/>
    </location>
</feature>
<feature type="sequence variant" id="VAR_017191" description="In dbSNP:rs17388190." evidence="6">
    <original>P</original>
    <variation>S</variation>
    <location>
        <position position="79"/>
    </location>
</feature>
<feature type="sequence variant" id="VAR_017192" description="In dbSNP:rs11761888." evidence="6 7">
    <original>L</original>
    <variation>S</variation>
    <location>
        <position position="336"/>
    </location>
</feature>
<feature type="sequence variant" id="VAR_017193" description="In dbSNP:rs17854248." evidence="6 7">
    <original>E</original>
    <variation>D</variation>
    <location>
        <position position="338"/>
    </location>
</feature>
<feature type="sequence variant" id="VAR_048596" description="In dbSNP:rs11765961.">
    <original>S</original>
    <variation>G</variation>
    <location>
        <position position="378"/>
    </location>
</feature>
<feature type="sequence conflict" description="In Ref. 3; BAC04122." evidence="9" ref="3">
    <original>K</original>
    <variation>R</variation>
    <location>
        <position position="108"/>
    </location>
</feature>
<feature type="sequence conflict" description="In Ref. 6; AAH39362." evidence="9" ref="6">
    <original>E</original>
    <variation>G</variation>
    <location>
        <position position="117"/>
    </location>
</feature>
<feature type="sequence conflict" description="In Ref. 3; BAD18389." evidence="9" ref="3">
    <original>H</original>
    <variation>R</variation>
    <location>
        <position position="293"/>
    </location>
</feature>